<organism>
    <name type="scientific">Bos taurus</name>
    <name type="common">Bovine</name>
    <dbReference type="NCBI Taxonomy" id="9913"/>
    <lineage>
        <taxon>Eukaryota</taxon>
        <taxon>Metazoa</taxon>
        <taxon>Chordata</taxon>
        <taxon>Craniata</taxon>
        <taxon>Vertebrata</taxon>
        <taxon>Euteleostomi</taxon>
        <taxon>Mammalia</taxon>
        <taxon>Eutheria</taxon>
        <taxon>Laurasiatheria</taxon>
        <taxon>Artiodactyla</taxon>
        <taxon>Ruminantia</taxon>
        <taxon>Pecora</taxon>
        <taxon>Bovidae</taxon>
        <taxon>Bovinae</taxon>
        <taxon>Bos</taxon>
    </lineage>
</organism>
<accession>Q29RH2</accession>
<feature type="chain" id="PRO_0000259930" description="Terminal nucleotidyltransferase 5B">
    <location>
        <begin position="1"/>
        <end position="430"/>
    </location>
</feature>
<feature type="region of interest" description="Disordered" evidence="2">
    <location>
        <begin position="1"/>
        <end position="46"/>
    </location>
</feature>
<feature type="compositionally biased region" description="Low complexity" evidence="2">
    <location>
        <begin position="15"/>
        <end position="44"/>
    </location>
</feature>
<gene>
    <name evidence="1" type="primary">TENT5B</name>
    <name evidence="1" type="synonym">FAM46B</name>
</gene>
<keyword id="KW-0963">Cytoplasm</keyword>
<keyword id="KW-0548">Nucleotidyltransferase</keyword>
<keyword id="KW-0539">Nucleus</keyword>
<keyword id="KW-1185">Reference proteome</keyword>
<keyword id="KW-0808">Transferase</keyword>
<dbReference type="EC" id="2.7.7.19" evidence="1"/>
<dbReference type="EMBL" id="BC114174">
    <property type="protein sequence ID" value="AAI14175.1"/>
    <property type="molecule type" value="mRNA"/>
</dbReference>
<dbReference type="RefSeq" id="NP_001039415.1">
    <property type="nucleotide sequence ID" value="NM_001045950.1"/>
</dbReference>
<dbReference type="SMR" id="Q29RH2"/>
<dbReference type="FunCoup" id="Q29RH2">
    <property type="interactions" value="126"/>
</dbReference>
<dbReference type="STRING" id="9913.ENSBTAP00000024500"/>
<dbReference type="PaxDb" id="9913-ENSBTAP00000024500"/>
<dbReference type="Ensembl" id="ENSBTAT00000024500.6">
    <property type="protein sequence ID" value="ENSBTAP00000024500.4"/>
    <property type="gene ID" value="ENSBTAG00000018413.6"/>
</dbReference>
<dbReference type="GeneID" id="506745"/>
<dbReference type="KEGG" id="bta:506745"/>
<dbReference type="CTD" id="115572"/>
<dbReference type="VEuPathDB" id="HostDB:ENSBTAG00000018413"/>
<dbReference type="VGNC" id="VGNC:28816">
    <property type="gene designation" value="TENT5B"/>
</dbReference>
<dbReference type="eggNOG" id="KOG3852">
    <property type="taxonomic scope" value="Eukaryota"/>
</dbReference>
<dbReference type="GeneTree" id="ENSGT00940000160747"/>
<dbReference type="HOGENOM" id="CLU_008115_2_0_1"/>
<dbReference type="InParanoid" id="Q29RH2"/>
<dbReference type="OMA" id="CVHSVRL"/>
<dbReference type="OrthoDB" id="10065073at2759"/>
<dbReference type="TreeFam" id="TF315239"/>
<dbReference type="Proteomes" id="UP000009136">
    <property type="component" value="Chromosome 2"/>
</dbReference>
<dbReference type="Bgee" id="ENSBTAG00000018413">
    <property type="expression patterns" value="Expressed in surface of tongue and 100 other cell types or tissues"/>
</dbReference>
<dbReference type="GO" id="GO:0005737">
    <property type="term" value="C:cytoplasm"/>
    <property type="evidence" value="ECO:0000250"/>
    <property type="project" value="UniProtKB"/>
</dbReference>
<dbReference type="GO" id="GO:0005634">
    <property type="term" value="C:nucleus"/>
    <property type="evidence" value="ECO:0000250"/>
    <property type="project" value="UniProtKB"/>
</dbReference>
<dbReference type="GO" id="GO:1990817">
    <property type="term" value="F:poly(A) RNA polymerase activity"/>
    <property type="evidence" value="ECO:0000250"/>
    <property type="project" value="UniProtKB"/>
</dbReference>
<dbReference type="GO" id="GO:0048255">
    <property type="term" value="P:mRNA stabilization"/>
    <property type="evidence" value="ECO:0000318"/>
    <property type="project" value="GO_Central"/>
</dbReference>
<dbReference type="GO" id="GO:0043066">
    <property type="term" value="P:negative regulation of apoptotic process"/>
    <property type="evidence" value="ECO:0000250"/>
    <property type="project" value="UniProtKB"/>
</dbReference>
<dbReference type="GO" id="GO:0045786">
    <property type="term" value="P:negative regulation of cell cycle"/>
    <property type="evidence" value="ECO:0000250"/>
    <property type="project" value="UniProtKB"/>
</dbReference>
<dbReference type="GO" id="GO:0008285">
    <property type="term" value="P:negative regulation of cell population proliferation"/>
    <property type="evidence" value="ECO:0000250"/>
    <property type="project" value="UniProtKB"/>
</dbReference>
<dbReference type="GO" id="GO:0045727">
    <property type="term" value="P:positive regulation of translation"/>
    <property type="evidence" value="ECO:0000250"/>
    <property type="project" value="UniProtKB"/>
</dbReference>
<dbReference type="InterPro" id="IPR012937">
    <property type="entry name" value="TET5"/>
</dbReference>
<dbReference type="PANTHER" id="PTHR12974">
    <property type="entry name" value="PRION-LIKE- Q/N-RICH -DOMAIN-BEARING PROTEIN PROTEIN 44"/>
    <property type="match status" value="1"/>
</dbReference>
<dbReference type="PANTHER" id="PTHR12974:SF46">
    <property type="entry name" value="TERMINAL NUCLEOTIDYLTRANSFERASE 5B"/>
    <property type="match status" value="1"/>
</dbReference>
<dbReference type="Pfam" id="PF07984">
    <property type="entry name" value="NTP_transf_7"/>
    <property type="match status" value="1"/>
</dbReference>
<dbReference type="SMART" id="SM01153">
    <property type="entry name" value="DUF1693"/>
    <property type="match status" value="1"/>
</dbReference>
<comment type="function">
    <text evidence="1">Catalyzes the transfer of one adenosine molecule from an ATP to an mRNA poly(A) tail bearing a 3'-OH terminal group in an ATP hydrolysis-dependent manner. May be involved in maintaining the translation efficiency of at least some genes through preventing degradation of their mRNAs. Prefers RNA molecules that are adenosine-rich close to 3'-end. In addition, may inhibit cell proliferation and cell cycle progression through ubiquitination of beta-catenin/CTNNB1.</text>
</comment>
<comment type="catalytic activity">
    <reaction evidence="1">
        <text>RNA(n) + ATP = RNA(n)-3'-adenine ribonucleotide + diphosphate</text>
        <dbReference type="Rhea" id="RHEA:11332"/>
        <dbReference type="Rhea" id="RHEA-COMP:14527"/>
        <dbReference type="Rhea" id="RHEA-COMP:17347"/>
        <dbReference type="ChEBI" id="CHEBI:30616"/>
        <dbReference type="ChEBI" id="CHEBI:33019"/>
        <dbReference type="ChEBI" id="CHEBI:140395"/>
        <dbReference type="ChEBI" id="CHEBI:173115"/>
        <dbReference type="EC" id="2.7.7.19"/>
    </reaction>
    <physiologicalReaction direction="left-to-right" evidence="1">
        <dbReference type="Rhea" id="RHEA:11333"/>
    </physiologicalReaction>
</comment>
<comment type="subcellular location">
    <subcellularLocation>
        <location evidence="1">Cytoplasm</location>
    </subcellularLocation>
    <subcellularLocation>
        <location evidence="1">Nucleus</location>
    </subcellularLocation>
</comment>
<comment type="similarity">
    <text evidence="3">Belongs to the TENT family.</text>
</comment>
<comment type="caution">
    <text evidence="3">It is uncertain whether Met-1 or Met-2 is the initiator.</text>
</comment>
<protein>
    <recommendedName>
        <fullName evidence="1">Terminal nucleotidyltransferase 5B</fullName>
        <ecNumber evidence="1">2.7.7.19</ecNumber>
    </recommendedName>
    <alternativeName>
        <fullName>Non-canonical poly(A) polymerase FAM46B</fullName>
    </alternativeName>
</protein>
<proteinExistence type="evidence at transcript level"/>
<reference key="1">
    <citation type="submission" date="2006-02" db="EMBL/GenBank/DDBJ databases">
        <authorList>
            <consortium name="NIH - Mammalian Gene Collection (MGC) project"/>
        </authorList>
    </citation>
    <scope>NUCLEOTIDE SEQUENCE [LARGE SCALE MRNA]</scope>
    <source>
        <strain>Hereford</strain>
        <tissue>Heart ventricle</tissue>
    </source>
</reference>
<evidence type="ECO:0000250" key="1">
    <source>
        <dbReference type="UniProtKB" id="Q96A09"/>
    </source>
</evidence>
<evidence type="ECO:0000256" key="2">
    <source>
        <dbReference type="SAM" id="MobiDB-lite"/>
    </source>
</evidence>
<evidence type="ECO:0000305" key="3"/>
<name>TET5B_BOVIN</name>
<sequence>MMPSESETESRDRAAAQVGTAAAAAVAKAAPAGGGPDPEASSASLGQHLSGLSWPQVKRLDALLSEPIPIHGRGNFPTLSVQPRQIVQVVRSSLEEQGLRVHGVRLHGSAASHVLHPESGLGYKDLDLVFRVDLRSEASFQLTKEVVLACLLDFLPAGVSRAKITPLTLKEAYVQKLVKVCTDTDRWSLISLSNKSGKNVELKFVDSVRRQFEFSVDSFQILLDSLLLFSQCSPTPMSEAFHPSVTGESLYGDFAEALDHLRHRVIATRSPEEIRGGGLLKYCHLLVRGFRPRPSTDVGALQRYMCSRFFIDFPDLVEQRRTLERYLEAHFSGADAARRYACLVTLHRVVNESTVCLMNHERRQTLDLITALALQALAEQGPAAAAALAWRCPAIPDGLVPATTVSYYVTPVQPLLARAHASYPTWLPCN</sequence>